<sequence length="412" mass="45534">MRSAPTARAALVLCAATAGLLSAQGSPEPPEAPRFASWDEVNVLAHGLLQLGRGLREHVERTRGQLGALERRLSACGAACKDPEGSAVPPLTAGNLVPSQSDAAPETLHSLQTQLKAQNSKIQQLFQKVAQQQRHLEKQHLRIQNLQGQLDHLAPMHLGHGVAKAARRKRLPKMTQPAGPAHNISRLHRLPRDCQELFEEGERQSGLFQIQPQGSPPFLVNCKMTSDGGWTVIQRRQDGSVDFNQPWEAYKDGFGDPKGEFWLGLEKVHRIMGDRGSRLAVQLQDWEGNAESLQFPVHLGGEDTAYSLQLTAPVASKLGATIDTPSGLSLPFSTWDQDHDLRGDKNCAKILSGGWWFGTCSHSNLNGQYFHSIPRQREQRKKGIFWKTWRGRYYPLQATTMLIQPTVAEAAS</sequence>
<comment type="function">
    <text evidence="1 2">Mediates inactivation of the lipoprotein lipase LPL, and thereby plays a role in the regulation of triglyceride clearance from the blood serum and in lipid metabolism. May also play a role in regulating glucose homeostasis and insulin sensitivity. Inhibits proliferation, migration, and tubule formation of endothelial cells and reduces vascular leakage (By similarity). Upon heterologous expression, inhibits the adhesion of endothelial cell to the extracellular matrix (ECM), and inhibits the reorganization of the actin cytoskeleton, formation of actin stress fibers and focal adhesions in endothelial cells that have adhered to ANGPTL4-containing ECM (in vitro) (By similarity). Depending on context, may modulate tumor-related angiogenesis (By similarity).</text>
</comment>
<comment type="function">
    <molecule>ANGPTL4 N-terminal chain</molecule>
    <text evidence="1">Mediates inactivation of the lipoprotein lipase LPL, and thereby plays an important role in the regulation of triglyceride clearance from the blood serum and in lipid metabolism. Has higher activity in LPL inactivation than the uncleaved protein.</text>
</comment>
<comment type="subunit">
    <text evidence="1 2">Homooligomer; disulfide-linked via Cys residues in the N-terminal part of the protein (By similarity). The homooligomer undergoes proteolytic processing to release the ANGPTL4 C-terminal chain, which circulates as a monomer. The homooligomer unprocessed form is able to interact with the extracellular matrix (By similarity).</text>
</comment>
<comment type="subcellular location">
    <subcellularLocation>
        <location evidence="2">Secreted</location>
    </subcellularLocation>
    <subcellularLocation>
        <location evidence="1">Secreted</location>
        <location evidence="1">Extracellular space</location>
        <location evidence="1">Extracellular matrix</location>
    </subcellularLocation>
    <text evidence="1">The unprocessed form interacts with the extracellular matrix. This may constitute a dynamic reservoir, a regulatory mechanism of the bioavailability of ANGPTL4.</text>
</comment>
<comment type="PTM">
    <text evidence="1">N-glycosylated.</text>
</comment>
<comment type="PTM">
    <molecule>ANGPTL4 N-terminal chain</molecule>
    <text evidence="1">Forms disulfide-linked dimers and tetramers.</text>
</comment>
<comment type="PTM">
    <text evidence="1">Cleaved into a smaller N-terminal chain and a larger chain that contains the fibrinogen C-terminal domain; both cleaved and uncleaved forms are detected in the extracellular space. The cleaved form is not present within the cell.</text>
</comment>
<accession>Q2TNK5</accession>
<accession>Q1H5H6</accession>
<accession>Q7YS01</accession>
<organism>
    <name type="scientific">Sus scrofa</name>
    <name type="common">Pig</name>
    <dbReference type="NCBI Taxonomy" id="9823"/>
    <lineage>
        <taxon>Eukaryota</taxon>
        <taxon>Metazoa</taxon>
        <taxon>Chordata</taxon>
        <taxon>Craniata</taxon>
        <taxon>Vertebrata</taxon>
        <taxon>Euteleostomi</taxon>
        <taxon>Mammalia</taxon>
        <taxon>Eutheria</taxon>
        <taxon>Laurasiatheria</taxon>
        <taxon>Artiodactyla</taxon>
        <taxon>Suina</taxon>
        <taxon>Suidae</taxon>
        <taxon>Sus</taxon>
    </lineage>
</organism>
<feature type="signal peptide" evidence="3">
    <location>
        <begin position="1"/>
        <end position="23"/>
    </location>
</feature>
<feature type="chain" id="PRO_0000278838" description="Angiopoietin-related protein 4">
    <location>
        <begin position="24"/>
        <end position="412"/>
    </location>
</feature>
<feature type="chain" id="PRO_0000446863" description="ANGPTL4 N-terminal chain">
    <location>
        <begin position="24"/>
        <end position="170"/>
    </location>
</feature>
<feature type="chain" id="PRO_0000446864" description="ANGPTL4 C-terminal chain">
    <location>
        <begin position="171"/>
        <end position="412"/>
    </location>
</feature>
<feature type="domain" description="Fibrinogen C-terminal" evidence="4">
    <location>
        <begin position="185"/>
        <end position="407"/>
    </location>
</feature>
<feature type="coiled-coil region" evidence="3">
    <location>
        <begin position="106"/>
        <end position="153"/>
    </location>
</feature>
<feature type="site" description="Cleavage" evidence="1">
    <location>
        <begin position="170"/>
        <end position="171"/>
    </location>
</feature>
<feature type="glycosylation site" description="N-linked (GlcNAc...) asparagine" evidence="3">
    <location>
        <position position="183"/>
    </location>
</feature>
<feature type="disulfide bond" evidence="4">
    <location>
        <begin position="194"/>
        <end position="222"/>
    </location>
</feature>
<feature type="disulfide bond" evidence="4">
    <location>
        <begin position="347"/>
        <end position="360"/>
    </location>
</feature>
<feature type="sequence conflict" description="In Ref. 2; AAY43330." evidence="5" ref="2">
    <original>L</original>
    <variation>P</variation>
    <location>
        <position position="49"/>
    </location>
</feature>
<feature type="sequence conflict" description="In Ref. 1; AAU93495." evidence="5" ref="1">
    <original>L</original>
    <variation>P</variation>
    <location>
        <position position="351"/>
    </location>
</feature>
<feature type="sequence conflict" description="In Ref. 3; AAP74568." evidence="5" ref="3">
    <original>RGRYYPLQATT</original>
    <variation>QESNSIPPCAG</variation>
    <location>
        <begin position="390"/>
        <end position="400"/>
    </location>
</feature>
<feature type="sequence conflict" description="In Ref. 1; AAU93495." evidence="5" ref="1">
    <original>A</original>
    <variation>V</variation>
    <location>
        <position position="410"/>
    </location>
</feature>
<proteinExistence type="evidence at transcript level"/>
<gene>
    <name type="primary">ANGPTL4</name>
    <name type="synonym">PGAR</name>
</gene>
<name>ANGL4_PIG</name>
<keyword id="KW-0037">Angiogenesis</keyword>
<keyword id="KW-0175">Coiled coil</keyword>
<keyword id="KW-1015">Disulfide bond</keyword>
<keyword id="KW-0272">Extracellular matrix</keyword>
<keyword id="KW-0325">Glycoprotein</keyword>
<keyword id="KW-0443">Lipid metabolism</keyword>
<keyword id="KW-1185">Reference proteome</keyword>
<keyword id="KW-0964">Secreted</keyword>
<keyword id="KW-0732">Signal</keyword>
<reference key="1">
    <citation type="submission" date="2004-09" db="EMBL/GenBank/DDBJ databases">
        <title>Molecular cloning, expression pattern and chromosomal mapping of pig ANGPTLs.</title>
        <authorList>
            <person name="Feng S."/>
            <person name="Yang Z."/>
        </authorList>
    </citation>
    <scope>NUCLEOTIDE SEQUENCE [MRNA]</scope>
</reference>
<reference key="2">
    <citation type="submission" date="2005-03" db="EMBL/GenBank/DDBJ databases">
        <title>Isolation and cloning pig angiopoietin-related protein gene.</title>
        <authorList>
            <person name="Ren Z."/>
            <person name="Xiong Y."/>
        </authorList>
    </citation>
    <scope>NUCLEOTIDE SEQUENCE [MRNA]</scope>
    <source>
        <tissue>Adipose tissue</tissue>
    </source>
</reference>
<reference key="3">
    <citation type="submission" date="2003-05" db="EMBL/GenBank/DDBJ databases">
        <title>Cloning of porcine PGAR from white adipose tissue.</title>
        <authorList>
            <person name="Ledoux S."/>
            <person name="Lord E."/>
            <person name="Palin M.-F."/>
            <person name="Murphy B.D."/>
        </authorList>
    </citation>
    <scope>NUCLEOTIDE SEQUENCE [MRNA] OF 214-400</scope>
    <source>
        <tissue>White adipose tissue</tissue>
    </source>
</reference>
<protein>
    <recommendedName>
        <fullName>Angiopoietin-related protein 4</fullName>
    </recommendedName>
    <alternativeName>
        <fullName>Angiopoietin-like protein 4</fullName>
    </alternativeName>
    <component>
        <recommendedName>
            <fullName>ANGPTL4 N-terminal chain</fullName>
        </recommendedName>
    </component>
    <component>
        <recommendedName>
            <fullName>ANGPTL4 C-terminal chain</fullName>
        </recommendedName>
    </component>
</protein>
<evidence type="ECO:0000250" key="1">
    <source>
        <dbReference type="UniProtKB" id="Q9BY76"/>
    </source>
</evidence>
<evidence type="ECO:0000250" key="2">
    <source>
        <dbReference type="UniProtKB" id="Q9Z1P8"/>
    </source>
</evidence>
<evidence type="ECO:0000255" key="3"/>
<evidence type="ECO:0000255" key="4">
    <source>
        <dbReference type="PROSITE-ProRule" id="PRU00739"/>
    </source>
</evidence>
<evidence type="ECO:0000305" key="5"/>
<dbReference type="EMBL" id="AY751522">
    <property type="protein sequence ID" value="AAU93495.1"/>
    <property type="molecule type" value="mRNA"/>
</dbReference>
<dbReference type="EMBL" id="AY974561">
    <property type="protein sequence ID" value="AAY43330.1"/>
    <property type="molecule type" value="mRNA"/>
</dbReference>
<dbReference type="EMBL" id="AY307772">
    <property type="protein sequence ID" value="AAP74568.1"/>
    <property type="molecule type" value="mRNA"/>
</dbReference>
<dbReference type="RefSeq" id="NP_001033733.1">
    <property type="nucleotide sequence ID" value="NM_001038644.1"/>
</dbReference>
<dbReference type="SMR" id="Q2TNK5"/>
<dbReference type="FunCoup" id="Q2TNK5">
    <property type="interactions" value="748"/>
</dbReference>
<dbReference type="STRING" id="9823.ENSSSCP00000014452"/>
<dbReference type="GlyCosmos" id="Q2TNK5">
    <property type="glycosylation" value="1 site, No reported glycans"/>
</dbReference>
<dbReference type="GlyGen" id="Q2TNK5">
    <property type="glycosylation" value="2 sites"/>
</dbReference>
<dbReference type="PaxDb" id="9823-ENSSSCP00000014452"/>
<dbReference type="Ensembl" id="ENSSSCT00000014853.4">
    <property type="protein sequence ID" value="ENSSSCP00000014452.2"/>
    <property type="gene ID" value="ENSSSCG00000013599.4"/>
</dbReference>
<dbReference type="Ensembl" id="ENSSSCT00015103302.1">
    <property type="protein sequence ID" value="ENSSSCP00015043021.1"/>
    <property type="gene ID" value="ENSSSCG00015076406.1"/>
</dbReference>
<dbReference type="Ensembl" id="ENSSSCT00025023650.1">
    <property type="protein sequence ID" value="ENSSSCP00025009921.1"/>
    <property type="gene ID" value="ENSSSCG00025017424.1"/>
</dbReference>
<dbReference type="Ensembl" id="ENSSSCT00030024980.1">
    <property type="protein sequence ID" value="ENSSSCP00030011175.1"/>
    <property type="gene ID" value="ENSSSCG00030018072.1"/>
</dbReference>
<dbReference type="Ensembl" id="ENSSSCT00035098512.1">
    <property type="protein sequence ID" value="ENSSSCP00035041623.1"/>
    <property type="gene ID" value="ENSSSCG00035072751.1"/>
</dbReference>
<dbReference type="Ensembl" id="ENSSSCT00040003351.1">
    <property type="protein sequence ID" value="ENSSSCP00040001007.1"/>
    <property type="gene ID" value="ENSSSCG00040002681.1"/>
</dbReference>
<dbReference type="Ensembl" id="ENSSSCT00045051597.1">
    <property type="protein sequence ID" value="ENSSSCP00045035890.1"/>
    <property type="gene ID" value="ENSSSCG00045030125.1"/>
</dbReference>
<dbReference type="Ensembl" id="ENSSSCT00050052424.1">
    <property type="protein sequence ID" value="ENSSSCP00050022008.1"/>
    <property type="gene ID" value="ENSSSCG00050038868.1"/>
</dbReference>
<dbReference type="Ensembl" id="ENSSSCT00055013699.1">
    <property type="protein sequence ID" value="ENSSSCP00055010785.1"/>
    <property type="gene ID" value="ENSSSCG00055006995.1"/>
</dbReference>
<dbReference type="Ensembl" id="ENSSSCT00060031039.1">
    <property type="protein sequence ID" value="ENSSSCP00060013320.1"/>
    <property type="gene ID" value="ENSSSCG00060022855.1"/>
</dbReference>
<dbReference type="Ensembl" id="ENSSSCT00065055752.1">
    <property type="protein sequence ID" value="ENSSSCP00065024233.1"/>
    <property type="gene ID" value="ENSSSCG00065040760.1"/>
</dbReference>
<dbReference type="Ensembl" id="ENSSSCT00070050589.1">
    <property type="protein sequence ID" value="ENSSSCP00070042762.1"/>
    <property type="gene ID" value="ENSSSCG00070025302.1"/>
</dbReference>
<dbReference type="Ensembl" id="ENSSSCT00105071474">
    <property type="protein sequence ID" value="ENSSSCP00105050598"/>
    <property type="gene ID" value="ENSSSCG00105037473"/>
</dbReference>
<dbReference type="Ensembl" id="ENSSSCT00110045602">
    <property type="protein sequence ID" value="ENSSSCP00110032165"/>
    <property type="gene ID" value="ENSSSCG00110023539"/>
</dbReference>
<dbReference type="Ensembl" id="ENSSSCT00115020477">
    <property type="protein sequence ID" value="ENSSSCP00115019391"/>
    <property type="gene ID" value="ENSSSCG00115011809"/>
</dbReference>
<dbReference type="Ensembl" id="ENSSSCT00130072126">
    <property type="protein sequence ID" value="ENSSSCP00130051953"/>
    <property type="gene ID" value="ENSSSCG00130036995"/>
</dbReference>
<dbReference type="GeneID" id="397628"/>
<dbReference type="KEGG" id="ssc:397628"/>
<dbReference type="CTD" id="51129"/>
<dbReference type="VGNC" id="VGNC:85306">
    <property type="gene designation" value="ANGPTL4"/>
</dbReference>
<dbReference type="eggNOG" id="KOG2579">
    <property type="taxonomic scope" value="Eukaryota"/>
</dbReference>
<dbReference type="GeneTree" id="ENSGT00940000159478"/>
<dbReference type="HOGENOM" id="CLU_038628_2_1_1"/>
<dbReference type="InParanoid" id="Q2TNK5"/>
<dbReference type="OMA" id="MATGFPF"/>
<dbReference type="OrthoDB" id="6145874at2759"/>
<dbReference type="TreeFam" id="TF329953"/>
<dbReference type="Reactome" id="R-SSC-8963889">
    <property type="pathway name" value="Assembly of active LPL and LIPC lipase complexes"/>
</dbReference>
<dbReference type="Reactome" id="R-SSC-9762292">
    <property type="pathway name" value="Regulation of CDH11 function"/>
</dbReference>
<dbReference type="Proteomes" id="UP000008227">
    <property type="component" value="Chromosome 2"/>
</dbReference>
<dbReference type="Proteomes" id="UP000314985">
    <property type="component" value="Chromosome 2"/>
</dbReference>
<dbReference type="Proteomes" id="UP000694570">
    <property type="component" value="Unplaced"/>
</dbReference>
<dbReference type="Proteomes" id="UP000694571">
    <property type="component" value="Unplaced"/>
</dbReference>
<dbReference type="Proteomes" id="UP000694720">
    <property type="component" value="Unplaced"/>
</dbReference>
<dbReference type="Proteomes" id="UP000694722">
    <property type="component" value="Unplaced"/>
</dbReference>
<dbReference type="Proteomes" id="UP000694723">
    <property type="component" value="Unplaced"/>
</dbReference>
<dbReference type="Proteomes" id="UP000694724">
    <property type="component" value="Unplaced"/>
</dbReference>
<dbReference type="Proteomes" id="UP000694725">
    <property type="component" value="Unplaced"/>
</dbReference>
<dbReference type="Proteomes" id="UP000694726">
    <property type="component" value="Unplaced"/>
</dbReference>
<dbReference type="Proteomes" id="UP000694727">
    <property type="component" value="Unplaced"/>
</dbReference>
<dbReference type="Proteomes" id="UP000694728">
    <property type="component" value="Unplaced"/>
</dbReference>
<dbReference type="Bgee" id="ENSSSCG00000013599">
    <property type="expression patterns" value="Expressed in granulosa cell and 36 other cell types or tissues"/>
</dbReference>
<dbReference type="GO" id="GO:0062023">
    <property type="term" value="C:collagen-containing extracellular matrix"/>
    <property type="evidence" value="ECO:0000318"/>
    <property type="project" value="GO_Central"/>
</dbReference>
<dbReference type="GO" id="GO:0005615">
    <property type="term" value="C:extracellular space"/>
    <property type="evidence" value="ECO:0000318"/>
    <property type="project" value="GO_Central"/>
</dbReference>
<dbReference type="GO" id="GO:0004857">
    <property type="term" value="F:enzyme inhibitor activity"/>
    <property type="evidence" value="ECO:0000318"/>
    <property type="project" value="GO_Central"/>
</dbReference>
<dbReference type="GO" id="GO:0042802">
    <property type="term" value="F:identical protein binding"/>
    <property type="evidence" value="ECO:0007669"/>
    <property type="project" value="Ensembl"/>
</dbReference>
<dbReference type="GO" id="GO:0035473">
    <property type="term" value="F:lipase binding"/>
    <property type="evidence" value="ECO:0007669"/>
    <property type="project" value="Ensembl"/>
</dbReference>
<dbReference type="GO" id="GO:0055102">
    <property type="term" value="F:lipase inhibitor activity"/>
    <property type="evidence" value="ECO:0007669"/>
    <property type="project" value="Ensembl"/>
</dbReference>
<dbReference type="GO" id="GO:0001525">
    <property type="term" value="P:angiogenesis"/>
    <property type="evidence" value="ECO:0007669"/>
    <property type="project" value="UniProtKB-KW"/>
</dbReference>
<dbReference type="GO" id="GO:0007596">
    <property type="term" value="P:blood coagulation"/>
    <property type="evidence" value="ECO:0007669"/>
    <property type="project" value="InterPro"/>
</dbReference>
<dbReference type="GO" id="GO:0072577">
    <property type="term" value="P:endothelial cell apoptotic process"/>
    <property type="evidence" value="ECO:0007669"/>
    <property type="project" value="Ensembl"/>
</dbReference>
<dbReference type="GO" id="GO:0006629">
    <property type="term" value="P:lipid metabolic process"/>
    <property type="evidence" value="ECO:0007669"/>
    <property type="project" value="UniProtKB-KW"/>
</dbReference>
<dbReference type="GO" id="GO:2000352">
    <property type="term" value="P:negative regulation of endothelial cell apoptotic process"/>
    <property type="evidence" value="ECO:0007669"/>
    <property type="project" value="Ensembl"/>
</dbReference>
<dbReference type="GO" id="GO:0045717">
    <property type="term" value="P:negative regulation of fatty acid biosynthetic process"/>
    <property type="evidence" value="ECO:0007669"/>
    <property type="project" value="Ensembl"/>
</dbReference>
<dbReference type="GO" id="GO:0010903">
    <property type="term" value="P:negative regulation of very-low-density lipoprotein particle remodeling"/>
    <property type="evidence" value="ECO:0007669"/>
    <property type="project" value="Ensembl"/>
</dbReference>
<dbReference type="GO" id="GO:0043335">
    <property type="term" value="P:protein unfolding"/>
    <property type="evidence" value="ECO:0007669"/>
    <property type="project" value="Ensembl"/>
</dbReference>
<dbReference type="GO" id="GO:0090318">
    <property type="term" value="P:regulation of chylomicron remodeling"/>
    <property type="evidence" value="ECO:0007669"/>
    <property type="project" value="Ensembl"/>
</dbReference>
<dbReference type="GO" id="GO:0070328">
    <property type="term" value="P:triglyceride homeostasis"/>
    <property type="evidence" value="ECO:0000318"/>
    <property type="project" value="GO_Central"/>
</dbReference>
<dbReference type="CDD" id="cd00087">
    <property type="entry name" value="FReD"/>
    <property type="match status" value="1"/>
</dbReference>
<dbReference type="FunFam" id="4.10.530.10:FF:000001">
    <property type="entry name" value="angiopoietin-2 isoform X1"/>
    <property type="match status" value="1"/>
</dbReference>
<dbReference type="Gene3D" id="3.90.215.10">
    <property type="entry name" value="Gamma Fibrinogen, chain A, domain 1"/>
    <property type="match status" value="1"/>
</dbReference>
<dbReference type="Gene3D" id="4.10.530.10">
    <property type="entry name" value="Gamma-fibrinogen Carboxyl Terminal Fragment, domain 2"/>
    <property type="match status" value="1"/>
</dbReference>
<dbReference type="InterPro" id="IPR037579">
    <property type="entry name" value="FIB_ANG-like"/>
</dbReference>
<dbReference type="InterPro" id="IPR036056">
    <property type="entry name" value="Fibrinogen-like_C"/>
</dbReference>
<dbReference type="InterPro" id="IPR014716">
    <property type="entry name" value="Fibrinogen_a/b/g_C_1"/>
</dbReference>
<dbReference type="InterPro" id="IPR002181">
    <property type="entry name" value="Fibrinogen_a/b/g_C_dom"/>
</dbReference>
<dbReference type="InterPro" id="IPR020837">
    <property type="entry name" value="Fibrinogen_CS"/>
</dbReference>
<dbReference type="PANTHER" id="PTHR47221">
    <property type="entry name" value="FIBRINOGEN ALPHA CHAIN"/>
    <property type="match status" value="1"/>
</dbReference>
<dbReference type="PANTHER" id="PTHR47221:SF6">
    <property type="entry name" value="FIBRINOGEN ALPHA CHAIN"/>
    <property type="match status" value="1"/>
</dbReference>
<dbReference type="Pfam" id="PF00147">
    <property type="entry name" value="Fibrinogen_C"/>
    <property type="match status" value="1"/>
</dbReference>
<dbReference type="SMART" id="SM00186">
    <property type="entry name" value="FBG"/>
    <property type="match status" value="1"/>
</dbReference>
<dbReference type="SUPFAM" id="SSF56496">
    <property type="entry name" value="Fibrinogen C-terminal domain-like"/>
    <property type="match status" value="1"/>
</dbReference>
<dbReference type="PROSITE" id="PS00514">
    <property type="entry name" value="FIBRINOGEN_C_1"/>
    <property type="match status" value="1"/>
</dbReference>
<dbReference type="PROSITE" id="PS51406">
    <property type="entry name" value="FIBRINOGEN_C_2"/>
    <property type="match status" value="1"/>
</dbReference>